<proteinExistence type="inferred from homology"/>
<reference key="1">
    <citation type="submission" date="2007-03" db="EMBL/GenBank/DDBJ databases">
        <title>Complete sequence of chromosome 2 of Burkholderia vietnamiensis G4.</title>
        <authorList>
            <consortium name="US DOE Joint Genome Institute"/>
            <person name="Copeland A."/>
            <person name="Lucas S."/>
            <person name="Lapidus A."/>
            <person name="Barry K."/>
            <person name="Detter J.C."/>
            <person name="Glavina del Rio T."/>
            <person name="Hammon N."/>
            <person name="Israni S."/>
            <person name="Dalin E."/>
            <person name="Tice H."/>
            <person name="Pitluck S."/>
            <person name="Chain P."/>
            <person name="Malfatti S."/>
            <person name="Shin M."/>
            <person name="Vergez L."/>
            <person name="Schmutz J."/>
            <person name="Larimer F."/>
            <person name="Land M."/>
            <person name="Hauser L."/>
            <person name="Kyrpides N."/>
            <person name="Tiedje J."/>
            <person name="Richardson P."/>
        </authorList>
    </citation>
    <scope>NUCLEOTIDE SEQUENCE [LARGE SCALE GENOMIC DNA]</scope>
    <source>
        <strain>G4 / LMG 22486</strain>
    </source>
</reference>
<gene>
    <name evidence="1" type="primary">acdS</name>
    <name type="ordered locus">Bcep1808_3930</name>
</gene>
<organism>
    <name type="scientific">Burkholderia vietnamiensis (strain G4 / LMG 22486)</name>
    <name type="common">Burkholderia cepacia (strain R1808)</name>
    <dbReference type="NCBI Taxonomy" id="269482"/>
    <lineage>
        <taxon>Bacteria</taxon>
        <taxon>Pseudomonadati</taxon>
        <taxon>Pseudomonadota</taxon>
        <taxon>Betaproteobacteria</taxon>
        <taxon>Burkholderiales</taxon>
        <taxon>Burkholderiaceae</taxon>
        <taxon>Burkholderia</taxon>
        <taxon>Burkholderia cepacia complex</taxon>
    </lineage>
</organism>
<keyword id="KW-0378">Hydrolase</keyword>
<keyword id="KW-0663">Pyridoxal phosphate</keyword>
<sequence length="338" mass="36694">MNLQRFPRYPLTFGPTPIQPLKRLSAHLGGKVELYAKREDCNSGLAFGGNKTRKLEYLIPDALAQGADTLVSIGGVQSNQTRQVAAVAAHLGMKCVLVQEHWVNYDDPVYDRVGNIQLSRMMGADVRLVADGFDIGIRRSWEDAMESVRQAGGKPYPIPAGCSEHPLGGLGFVGFAEEVREQEAQLGFRFDYVVVCSVTGSTQAGMVVGFAADGRADRVIGIDASATPERTREQITRIARHTAELVELGRPIADADVVLDTRYAGPEYGLPNDGTLEAIRLCARLEGVLTDPVYEGKSMHGMIDMVRRGEFEPGSKVLYAHLGGVPALSAYAEIFRDG</sequence>
<name>1A1D_BURVG</name>
<evidence type="ECO:0000255" key="1">
    <source>
        <dbReference type="HAMAP-Rule" id="MF_00807"/>
    </source>
</evidence>
<feature type="chain" id="PRO_1000047091" description="1-aminocyclopropane-1-carboxylate deaminase">
    <location>
        <begin position="1"/>
        <end position="338"/>
    </location>
</feature>
<feature type="active site" description="Nucleophile" evidence="1">
    <location>
        <position position="78"/>
    </location>
</feature>
<feature type="modified residue" description="N6-(pyridoxal phosphate)lysine" evidence="1">
    <location>
        <position position="51"/>
    </location>
</feature>
<dbReference type="EC" id="3.5.99.7" evidence="1"/>
<dbReference type="EMBL" id="CP000615">
    <property type="protein sequence ID" value="ABO56911.1"/>
    <property type="molecule type" value="Genomic_DNA"/>
</dbReference>
<dbReference type="SMR" id="A4JKV8"/>
<dbReference type="KEGG" id="bvi:Bcep1808_3930"/>
<dbReference type="eggNOG" id="COG2515">
    <property type="taxonomic scope" value="Bacteria"/>
</dbReference>
<dbReference type="HOGENOM" id="CLU_048897_2_1_4"/>
<dbReference type="Proteomes" id="UP000002287">
    <property type="component" value="Chromosome 2"/>
</dbReference>
<dbReference type="GO" id="GO:0008660">
    <property type="term" value="F:1-aminocyclopropane-1-carboxylate deaminase activity"/>
    <property type="evidence" value="ECO:0007669"/>
    <property type="project" value="UniProtKB-UniRule"/>
</dbReference>
<dbReference type="GO" id="GO:0019148">
    <property type="term" value="F:D-cysteine desulfhydrase activity"/>
    <property type="evidence" value="ECO:0007669"/>
    <property type="project" value="TreeGrafter"/>
</dbReference>
<dbReference type="GO" id="GO:0030170">
    <property type="term" value="F:pyridoxal phosphate binding"/>
    <property type="evidence" value="ECO:0007669"/>
    <property type="project" value="InterPro"/>
</dbReference>
<dbReference type="GO" id="GO:0018871">
    <property type="term" value="P:1-aminocyclopropane-1-carboxylate metabolic process"/>
    <property type="evidence" value="ECO:0007669"/>
    <property type="project" value="UniProtKB-UniRule"/>
</dbReference>
<dbReference type="GO" id="GO:0009310">
    <property type="term" value="P:amine catabolic process"/>
    <property type="evidence" value="ECO:0007669"/>
    <property type="project" value="InterPro"/>
</dbReference>
<dbReference type="CDD" id="cd06449">
    <property type="entry name" value="ACCD"/>
    <property type="match status" value="1"/>
</dbReference>
<dbReference type="FunFam" id="3.40.50.1100:FF:000048">
    <property type="entry name" value="1-aminocyclopropane-1-carboxylate deaminase"/>
    <property type="match status" value="1"/>
</dbReference>
<dbReference type="Gene3D" id="3.40.50.1100">
    <property type="match status" value="2"/>
</dbReference>
<dbReference type="HAMAP" id="MF_00807">
    <property type="entry name" value="ACC_deaminase"/>
    <property type="match status" value="1"/>
</dbReference>
<dbReference type="InterPro" id="IPR027278">
    <property type="entry name" value="ACCD_DCysDesulf"/>
</dbReference>
<dbReference type="InterPro" id="IPR005965">
    <property type="entry name" value="ACP_carboxylate_deaminase"/>
</dbReference>
<dbReference type="InterPro" id="IPR020601">
    <property type="entry name" value="ACP_carboxylate_deaminase_bac"/>
</dbReference>
<dbReference type="InterPro" id="IPR001926">
    <property type="entry name" value="TrpB-like_PALP"/>
</dbReference>
<dbReference type="InterPro" id="IPR036052">
    <property type="entry name" value="TrpB-like_PALP_sf"/>
</dbReference>
<dbReference type="NCBIfam" id="TIGR01274">
    <property type="entry name" value="ACC_deam"/>
    <property type="match status" value="1"/>
</dbReference>
<dbReference type="PANTHER" id="PTHR43780">
    <property type="entry name" value="1-AMINOCYCLOPROPANE-1-CARBOXYLATE DEAMINASE-RELATED"/>
    <property type="match status" value="1"/>
</dbReference>
<dbReference type="PANTHER" id="PTHR43780:SF2">
    <property type="entry name" value="1-AMINOCYCLOPROPANE-1-CARBOXYLATE DEAMINASE-RELATED"/>
    <property type="match status" value="1"/>
</dbReference>
<dbReference type="Pfam" id="PF00291">
    <property type="entry name" value="PALP"/>
    <property type="match status" value="1"/>
</dbReference>
<dbReference type="PIRSF" id="PIRSF006278">
    <property type="entry name" value="ACCD_DCysDesulf"/>
    <property type="match status" value="1"/>
</dbReference>
<dbReference type="SUPFAM" id="SSF53686">
    <property type="entry name" value="Tryptophan synthase beta subunit-like PLP-dependent enzymes"/>
    <property type="match status" value="1"/>
</dbReference>
<protein>
    <recommendedName>
        <fullName evidence="1">1-aminocyclopropane-1-carboxylate deaminase</fullName>
        <shortName evidence="1">ACC deaminase</shortName>
        <shortName evidence="1">ACCD</shortName>
        <ecNumber evidence="1">3.5.99.7</ecNumber>
    </recommendedName>
</protein>
<accession>A4JKV8</accession>
<comment type="function">
    <text evidence="1">Catalyzes a cyclopropane ring-opening reaction, the irreversible conversion of 1-aminocyclopropane-1-carboxylate (ACC) to ammonia and alpha-ketobutyrate. Allows growth on ACC as a nitrogen source.</text>
</comment>
<comment type="catalytic activity">
    <reaction evidence="1">
        <text>1-aminocyclopropane-1-carboxylate + H2O = 2-oxobutanoate + NH4(+)</text>
        <dbReference type="Rhea" id="RHEA:16933"/>
        <dbReference type="ChEBI" id="CHEBI:15377"/>
        <dbReference type="ChEBI" id="CHEBI:16763"/>
        <dbReference type="ChEBI" id="CHEBI:28938"/>
        <dbReference type="ChEBI" id="CHEBI:58360"/>
        <dbReference type="EC" id="3.5.99.7"/>
    </reaction>
</comment>
<comment type="cofactor">
    <cofactor evidence="1">
        <name>pyridoxal 5'-phosphate</name>
        <dbReference type="ChEBI" id="CHEBI:597326"/>
    </cofactor>
</comment>
<comment type="subunit">
    <text evidence="1">Homotrimer.</text>
</comment>
<comment type="similarity">
    <text evidence="1">Belongs to the ACC deaminase/D-cysteine desulfhydrase family.</text>
</comment>